<reference key="1">
    <citation type="journal article" date="2004" name="Nature">
        <title>The DNA sequence and analysis of human chromosome 13.</title>
        <authorList>
            <person name="Dunham A."/>
            <person name="Matthews L.H."/>
            <person name="Burton J."/>
            <person name="Ashurst J.L."/>
            <person name="Howe K.L."/>
            <person name="Ashcroft K.J."/>
            <person name="Beare D.M."/>
            <person name="Burford D.C."/>
            <person name="Hunt S.E."/>
            <person name="Griffiths-Jones S."/>
            <person name="Jones M.C."/>
            <person name="Keenan S.J."/>
            <person name="Oliver K."/>
            <person name="Scott C.E."/>
            <person name="Ainscough R."/>
            <person name="Almeida J.P."/>
            <person name="Ambrose K.D."/>
            <person name="Andrews D.T."/>
            <person name="Ashwell R.I.S."/>
            <person name="Babbage A.K."/>
            <person name="Bagguley C.L."/>
            <person name="Bailey J."/>
            <person name="Bannerjee R."/>
            <person name="Barlow K.F."/>
            <person name="Bates K."/>
            <person name="Beasley H."/>
            <person name="Bird C.P."/>
            <person name="Bray-Allen S."/>
            <person name="Brown A.J."/>
            <person name="Brown J.Y."/>
            <person name="Burrill W."/>
            <person name="Carder C."/>
            <person name="Carter N.P."/>
            <person name="Chapman J.C."/>
            <person name="Clamp M.E."/>
            <person name="Clark S.Y."/>
            <person name="Clarke G."/>
            <person name="Clee C.M."/>
            <person name="Clegg S.C."/>
            <person name="Cobley V."/>
            <person name="Collins J.E."/>
            <person name="Corby N."/>
            <person name="Coville G.J."/>
            <person name="Deloukas P."/>
            <person name="Dhami P."/>
            <person name="Dunham I."/>
            <person name="Dunn M."/>
            <person name="Earthrowl M.E."/>
            <person name="Ellington A.G."/>
            <person name="Faulkner L."/>
            <person name="Frankish A.G."/>
            <person name="Frankland J."/>
            <person name="French L."/>
            <person name="Garner P."/>
            <person name="Garnett J."/>
            <person name="Gilbert J.G.R."/>
            <person name="Gilson C.J."/>
            <person name="Ghori J."/>
            <person name="Grafham D.V."/>
            <person name="Gribble S.M."/>
            <person name="Griffiths C."/>
            <person name="Hall R.E."/>
            <person name="Hammond S."/>
            <person name="Harley J.L."/>
            <person name="Hart E.A."/>
            <person name="Heath P.D."/>
            <person name="Howden P.J."/>
            <person name="Huckle E.J."/>
            <person name="Hunt P.J."/>
            <person name="Hunt A.R."/>
            <person name="Johnson C."/>
            <person name="Johnson D."/>
            <person name="Kay M."/>
            <person name="Kimberley A.M."/>
            <person name="King A."/>
            <person name="Laird G.K."/>
            <person name="Langford C.J."/>
            <person name="Lawlor S."/>
            <person name="Leongamornlert D.A."/>
            <person name="Lloyd D.M."/>
            <person name="Lloyd C."/>
            <person name="Loveland J.E."/>
            <person name="Lovell J."/>
            <person name="Martin S."/>
            <person name="Mashreghi-Mohammadi M."/>
            <person name="McLaren S.J."/>
            <person name="McMurray A."/>
            <person name="Milne S."/>
            <person name="Moore M.J.F."/>
            <person name="Nickerson T."/>
            <person name="Palmer S.A."/>
            <person name="Pearce A.V."/>
            <person name="Peck A.I."/>
            <person name="Pelan S."/>
            <person name="Phillimore B."/>
            <person name="Porter K.M."/>
            <person name="Rice C.M."/>
            <person name="Searle S."/>
            <person name="Sehra H.K."/>
            <person name="Shownkeen R."/>
            <person name="Skuce C.D."/>
            <person name="Smith M."/>
            <person name="Steward C.A."/>
            <person name="Sycamore N."/>
            <person name="Tester J."/>
            <person name="Thomas D.W."/>
            <person name="Tracey A."/>
            <person name="Tromans A."/>
            <person name="Tubby B."/>
            <person name="Wall M."/>
            <person name="Wallis J.M."/>
            <person name="West A.P."/>
            <person name="Whitehead S.L."/>
            <person name="Willey D.L."/>
            <person name="Wilming L."/>
            <person name="Wray P.W."/>
            <person name="Wright M.W."/>
            <person name="Young L."/>
            <person name="Coulson A."/>
            <person name="Durbin R.M."/>
            <person name="Hubbard T."/>
            <person name="Sulston J.E."/>
            <person name="Beck S."/>
            <person name="Bentley D.R."/>
            <person name="Rogers J."/>
            <person name="Ross M.T."/>
        </authorList>
    </citation>
    <scope>NUCLEOTIDE SEQUENCE [LARGE SCALE GENOMIC DNA]</scope>
</reference>
<reference key="2">
    <citation type="journal article" date="2004" name="Genome Res.">
        <title>The status, quality, and expansion of the NIH full-length cDNA project: the Mammalian Gene Collection (MGC).</title>
        <authorList>
            <consortium name="The MGC Project Team"/>
        </authorList>
    </citation>
    <scope>NUCLEOTIDE SEQUENCE [LARGE SCALE MRNA]</scope>
    <scope>VARIANT LEU-260</scope>
    <source>
        <tissue>Brain</tissue>
        <tissue>Testis</tissue>
    </source>
</reference>
<reference key="3">
    <citation type="journal article" date="2004" name="Nat. Genet.">
        <title>Complete sequencing and characterization of 21,243 full-length human cDNAs.</title>
        <authorList>
            <person name="Ota T."/>
            <person name="Suzuki Y."/>
            <person name="Nishikawa T."/>
            <person name="Otsuki T."/>
            <person name="Sugiyama T."/>
            <person name="Irie R."/>
            <person name="Wakamatsu A."/>
            <person name="Hayashi K."/>
            <person name="Sato H."/>
            <person name="Nagai K."/>
            <person name="Kimura K."/>
            <person name="Makita H."/>
            <person name="Sekine M."/>
            <person name="Obayashi M."/>
            <person name="Nishi T."/>
            <person name="Shibahara T."/>
            <person name="Tanaka T."/>
            <person name="Ishii S."/>
            <person name="Yamamoto J."/>
            <person name="Saito K."/>
            <person name="Kawai Y."/>
            <person name="Isono Y."/>
            <person name="Nakamura Y."/>
            <person name="Nagahari K."/>
            <person name="Murakami K."/>
            <person name="Yasuda T."/>
            <person name="Iwayanagi T."/>
            <person name="Wagatsuma M."/>
            <person name="Shiratori A."/>
            <person name="Sudo H."/>
            <person name="Hosoiri T."/>
            <person name="Kaku Y."/>
            <person name="Kodaira H."/>
            <person name="Kondo H."/>
            <person name="Sugawara M."/>
            <person name="Takahashi M."/>
            <person name="Kanda K."/>
            <person name="Yokoi T."/>
            <person name="Furuya T."/>
            <person name="Kikkawa E."/>
            <person name="Omura Y."/>
            <person name="Abe K."/>
            <person name="Kamihara K."/>
            <person name="Katsuta N."/>
            <person name="Sato K."/>
            <person name="Tanikawa M."/>
            <person name="Yamazaki M."/>
            <person name="Ninomiya K."/>
            <person name="Ishibashi T."/>
            <person name="Yamashita H."/>
            <person name="Murakawa K."/>
            <person name="Fujimori K."/>
            <person name="Tanai H."/>
            <person name="Kimata M."/>
            <person name="Watanabe M."/>
            <person name="Hiraoka S."/>
            <person name="Chiba Y."/>
            <person name="Ishida S."/>
            <person name="Ono Y."/>
            <person name="Takiguchi S."/>
            <person name="Watanabe S."/>
            <person name="Yosida M."/>
            <person name="Hotuta T."/>
            <person name="Kusano J."/>
            <person name="Kanehori K."/>
            <person name="Takahashi-Fujii A."/>
            <person name="Hara H."/>
            <person name="Tanase T.-O."/>
            <person name="Nomura Y."/>
            <person name="Togiya S."/>
            <person name="Komai F."/>
            <person name="Hara R."/>
            <person name="Takeuchi K."/>
            <person name="Arita M."/>
            <person name="Imose N."/>
            <person name="Musashino K."/>
            <person name="Yuuki H."/>
            <person name="Oshima A."/>
            <person name="Sasaki N."/>
            <person name="Aotsuka S."/>
            <person name="Yoshikawa Y."/>
            <person name="Matsunawa H."/>
            <person name="Ichihara T."/>
            <person name="Shiohata N."/>
            <person name="Sano S."/>
            <person name="Moriya S."/>
            <person name="Momiyama H."/>
            <person name="Satoh N."/>
            <person name="Takami S."/>
            <person name="Terashima Y."/>
            <person name="Suzuki O."/>
            <person name="Nakagawa S."/>
            <person name="Senoh A."/>
            <person name="Mizoguchi H."/>
            <person name="Goto Y."/>
            <person name="Shimizu F."/>
            <person name="Wakebe H."/>
            <person name="Hishigaki H."/>
            <person name="Watanabe T."/>
            <person name="Sugiyama A."/>
            <person name="Takemoto M."/>
            <person name="Kawakami B."/>
            <person name="Yamazaki M."/>
            <person name="Watanabe K."/>
            <person name="Kumagai A."/>
            <person name="Itakura S."/>
            <person name="Fukuzumi Y."/>
            <person name="Fujimori Y."/>
            <person name="Komiyama M."/>
            <person name="Tashiro H."/>
            <person name="Tanigami A."/>
            <person name="Fujiwara T."/>
            <person name="Ono T."/>
            <person name="Yamada K."/>
            <person name="Fujii Y."/>
            <person name="Ozaki K."/>
            <person name="Hirao M."/>
            <person name="Ohmori Y."/>
            <person name="Kawabata A."/>
            <person name="Hikiji T."/>
            <person name="Kobatake N."/>
            <person name="Inagaki H."/>
            <person name="Ikema Y."/>
            <person name="Okamoto S."/>
            <person name="Okitani R."/>
            <person name="Kawakami T."/>
            <person name="Noguchi S."/>
            <person name="Itoh T."/>
            <person name="Shigeta K."/>
            <person name="Senba T."/>
            <person name="Matsumura K."/>
            <person name="Nakajima Y."/>
            <person name="Mizuno T."/>
            <person name="Morinaga M."/>
            <person name="Sasaki M."/>
            <person name="Togashi T."/>
            <person name="Oyama M."/>
            <person name="Hata H."/>
            <person name="Watanabe M."/>
            <person name="Komatsu T."/>
            <person name="Mizushima-Sugano J."/>
            <person name="Satoh T."/>
            <person name="Shirai Y."/>
            <person name="Takahashi Y."/>
            <person name="Nakagawa K."/>
            <person name="Okumura K."/>
            <person name="Nagase T."/>
            <person name="Nomura N."/>
            <person name="Kikuchi H."/>
            <person name="Masuho Y."/>
            <person name="Yamashita R."/>
            <person name="Nakai K."/>
            <person name="Yada T."/>
            <person name="Nakamura Y."/>
            <person name="Ohara O."/>
            <person name="Isogai T."/>
            <person name="Sugano S."/>
        </authorList>
    </citation>
    <scope>NUCLEOTIDE SEQUENCE [LARGE SCALE MRNA] OF 61-434</scope>
    <source>
        <tissue>Kidney</tissue>
    </source>
</reference>
<reference key="4">
    <citation type="journal article" date="2008" name="Proc. Natl. Acad. Sci. U.S.A.">
        <title>A quantitative atlas of mitotic phosphorylation.</title>
        <authorList>
            <person name="Dephoure N."/>
            <person name="Zhou C."/>
            <person name="Villen J."/>
            <person name="Beausoleil S.A."/>
            <person name="Bakalarski C.E."/>
            <person name="Elledge S.J."/>
            <person name="Gygi S.P."/>
        </authorList>
    </citation>
    <scope>PHOSPHORYLATION [LARGE SCALE ANALYSIS] AT SER-205</scope>
    <scope>IDENTIFICATION BY MASS SPECTROMETRY [LARGE SCALE ANALYSIS]</scope>
    <source>
        <tissue>Cervix carcinoma</tissue>
    </source>
</reference>
<reference key="5">
    <citation type="journal article" date="2011" name="BMC Syst. Biol.">
        <title>Initial characterization of the human central proteome.</title>
        <authorList>
            <person name="Burkard T.R."/>
            <person name="Planyavsky M."/>
            <person name="Kaupe I."/>
            <person name="Breitwieser F.P."/>
            <person name="Buerckstuemmer T."/>
            <person name="Bennett K.L."/>
            <person name="Superti-Furga G."/>
            <person name="Colinge J."/>
        </authorList>
    </citation>
    <scope>IDENTIFICATION BY MASS SPECTROMETRY [LARGE SCALE ANALYSIS]</scope>
</reference>
<reference key="6">
    <citation type="journal article" date="2013" name="Science">
        <title>EMRE is an essential component of the mitochondrial calcium uniporter complex.</title>
        <authorList>
            <person name="Sancak Y."/>
            <person name="Markhard A.L."/>
            <person name="Kitami T."/>
            <person name="Kovacs-Bogdan E."/>
            <person name="Kamer K.J."/>
            <person name="Udeshi N.D."/>
            <person name="Carr S.A."/>
            <person name="Chaudhuri D."/>
            <person name="Clapham D.E."/>
            <person name="Li A.A."/>
            <person name="Calvo S.E."/>
            <person name="Goldberger O."/>
            <person name="Mootha V.K."/>
        </authorList>
    </citation>
    <scope>SUBCELLULAR LOCATION</scope>
    <scope>IDENTIFICATION IN THE UNIPLEX COMPLEX</scope>
</reference>
<reference key="7">
    <citation type="journal article" date="2014" name="EMBO Rep.">
        <title>MICU1 and MICU2 play nonredundant roles in the regulation of the mitochondrial calcium uniporter.</title>
        <authorList>
            <person name="Kamer K.J."/>
            <person name="Mootha V.K."/>
        </authorList>
    </citation>
    <scope>FUNCTION</scope>
    <scope>MUTAGENESIS OF ASP-185; ASP-375 AND GLU-386</scope>
</reference>
<reference key="8">
    <citation type="journal article" date="2014" name="Mol. Cell">
        <title>MICU1 and MICU2 finely tune the mitochondrial Ca(2+) uniporter by exerting opposite effects on MCU activity.</title>
        <authorList>
            <person name="Patron M."/>
            <person name="Checchetto V."/>
            <person name="Raffaello A."/>
            <person name="Teardo E."/>
            <person name="Vecellio Reane D."/>
            <person name="Mantoan M."/>
            <person name="Granatiero V."/>
            <person name="Szabo I."/>
            <person name="De Stefani D."/>
            <person name="Rizzuto R."/>
        </authorList>
    </citation>
    <scope>FUNCTION</scope>
    <scope>SUBCELLULAR LOCATION</scope>
    <scope>INTERACTION WITH MICU1</scope>
</reference>
<reference key="9">
    <citation type="journal article" date="2015" name="Cell Metab.">
        <title>The Ca(2+)-dependent release of the Mia40-induced MICU1-MICU2 dimer from MCU regulates mitochondrial Ca(2+) uptake.</title>
        <authorList>
            <person name="Petrungaro C."/>
            <person name="Zimmermann K.M."/>
            <person name="Kuettner V."/>
            <person name="Fischer M."/>
            <person name="Dengjel J."/>
            <person name="Bogeski I."/>
            <person name="Riemer J."/>
        </authorList>
    </citation>
    <scope>SUBUNIT</scope>
    <scope>INTERACTION WITH MICU1</scope>
</reference>
<reference key="10">
    <citation type="journal article" date="2015" name="EMBO Rep.">
        <title>Structure and function of the N-terminal domain of the human mitochondrial calcium uniporter.</title>
        <authorList>
            <person name="Lee Y."/>
            <person name="Min C.K."/>
            <person name="Kim T.G."/>
            <person name="Song H.K."/>
            <person name="Lim Y."/>
            <person name="Kim D."/>
            <person name="Shin K."/>
            <person name="Kang M."/>
            <person name="Kang J.Y."/>
            <person name="Youn H.S."/>
            <person name="Lee J.G."/>
            <person name="An J.Y."/>
            <person name="Park K.R."/>
            <person name="Lim J.J."/>
            <person name="Kim J.H."/>
            <person name="Kim J.H."/>
            <person name="Park Z.Y."/>
            <person name="Kim Y.S."/>
            <person name="Wang J."/>
            <person name="Kim D.H."/>
            <person name="Eom S.H."/>
        </authorList>
    </citation>
    <scope>INTERACTION WITH MCU</scope>
</reference>
<reference key="11">
    <citation type="journal article" date="2015" name="Proteomics">
        <title>N-terminome analysis of the human mitochondrial proteome.</title>
        <authorList>
            <person name="Vaca Jacome A.S."/>
            <person name="Rabilloud T."/>
            <person name="Schaeffer-Reiss C."/>
            <person name="Rompais M."/>
            <person name="Ayoub D."/>
            <person name="Lane L."/>
            <person name="Bairoch A."/>
            <person name="Van Dorsselaer A."/>
            <person name="Carapito C."/>
        </authorList>
    </citation>
    <scope>IDENTIFICATION BY MASS SPECTROMETRY [LARGE SCALE ANALYSIS]</scope>
</reference>
<reference key="12">
    <citation type="journal article" date="2016" name="Biochim. Biophys. Acta">
        <title>Functional roles of MICU1 and MICU2 in mitochondrial Ca(2+) uptake.</title>
        <authorList>
            <person name="Matesanz-Isabel J."/>
            <person name="Arias-Del-Val J."/>
            <person name="Alvarez-Illera P."/>
            <person name="Fonteriz R.I."/>
            <person name="Montero M."/>
            <person name="Alvarez J."/>
        </authorList>
    </citation>
    <scope>FUNCTION</scope>
</reference>
<reference key="13">
    <citation type="journal article" date="2016" name="Cell Rep.">
        <title>EMRE is a matrix Ca(2+) sensor that governs gatekeeping of the mitochondrial Ca(2+) uniporter.</title>
        <authorList>
            <person name="Vais H."/>
            <person name="Mallilankaraman K."/>
            <person name="Mak D.O."/>
            <person name="Hoff H."/>
            <person name="Payne R."/>
            <person name="Tanis J.E."/>
            <person name="Foskett J.K."/>
        </authorList>
    </citation>
    <scope>SUBCELLULAR LOCATION</scope>
</reference>
<reference key="14">
    <citation type="journal article" date="2016" name="Elife">
        <title>Dual functions of a small regulatory subunit in the mitochondrial calcium uniporter complex.</title>
        <authorList>
            <person name="Tsai M.F."/>
            <person name="Phillips C.B."/>
            <person name="Ranaghan M."/>
            <person name="Tsai C.W."/>
            <person name="Wu Y."/>
            <person name="Willliams C."/>
            <person name="Miller C."/>
        </authorList>
    </citation>
    <scope>SUBCELLULAR LOCATION</scope>
</reference>
<reference key="15">
    <citation type="journal article" date="2017" name="EMBO Rep.">
        <title>High-affinity cooperative Ca2+ binding by MICU1-MICU2 serves as an on-off switch for the uniporter.</title>
        <authorList>
            <person name="Kamer K.J."/>
            <person name="Grabarek Z."/>
            <person name="Mootha V.K."/>
        </authorList>
    </citation>
    <scope>FUNCTION</scope>
    <scope>SUBCELLULAR LOCATION</scope>
    <scope>INTERACTION WITH MICU1</scope>
</reference>
<reference evidence="25" key="16">
    <citation type="journal article" date="2019" name="Cell Rep.">
        <title>Dimerization of MICU proteins controls Ca2+ influx through the mitochondrial Ca2+ uniporter.</title>
        <authorList>
            <person name="Xing Y."/>
            <person name="Wang M."/>
            <person name="Wang J."/>
            <person name="Nie Z."/>
            <person name="Wu G."/>
            <person name="Yang X."/>
            <person name="Shen Y."/>
        </authorList>
    </citation>
    <scope>X-RAY CRYSTALLOGRAPHY (2.74 ANGSTROMS) OF 62-398</scope>
    <scope>FUNCTION</scope>
    <scope>INTERACTION WITH MICU1</scope>
</reference>
<reference evidence="26" key="17">
    <citation type="journal article" date="2019" name="EMBO Rep.">
        <title>The crystal structure of MICU2 provides insight into Ca2+ binding and MICU1-MICU2 heterodimer formation.</title>
        <authorList>
            <person name="Wu W."/>
            <person name="Shen Q."/>
            <person name="Lei Z."/>
            <person name="Qiu Z."/>
            <person name="Li D."/>
            <person name="Pei H."/>
            <person name="Zheng J."/>
            <person name="Jia Z."/>
        </authorList>
    </citation>
    <scope>X-RAY CRYSTALLOGRAPHY (1.96 ANGSTROMS) OF 85-406 IN COMPLEX WITH CALCIUM</scope>
    <scope>FUNCTION</scope>
    <scope>DOMAIN</scope>
    <scope>INTERACTION WITH MICU1</scope>
    <scope>MUTAGENESIS OF LYS-172; ASP-185; GLU-196; GLU-329 AND ARG-352</scope>
</reference>
<reference evidence="35" key="18">
    <citation type="journal article" date="2020" name="Elife">
        <title>Structures reveal gatekeeping of the mitochondrial Ca2+ uniporter by MICU1-MICU2.</title>
        <authorList>
            <person name="Wang C."/>
            <person name="Jacewicz A."/>
            <person name="Delgado B.D."/>
            <person name="Baradaran R."/>
            <person name="Long S.B."/>
        </authorList>
    </citation>
    <scope>STRUCTURE BY ELECTRON MICROSCOPY (3.10 ANGSTROMS) OF 52-434 OF THE UNIPLEX COMPLEX</scope>
    <scope>FUNCTION</scope>
    <scope>IDENTIFICATION IN THE UNIPLEX COMPLEX</scope>
</reference>
<reference evidence="33 34" key="19">
    <citation type="journal article" date="2020" name="Elife">
        <title>Structural insights into the Ca2+-dependent gating of the human mitochondrial calcium uniporter.</title>
        <authorList>
            <person name="Wang Y."/>
            <person name="Han Y."/>
            <person name="She J."/>
            <person name="Nguyen N.X."/>
            <person name="Mootha V.K."/>
            <person name="Bai X.C."/>
            <person name="Jiang Y."/>
        </authorList>
    </citation>
    <scope>STRUCTURE BY ELECTRON MICROSCOPY (4.17 ANGSTROMS) OF THE UNIPLEX COMPLEX</scope>
    <scope>FUNCTION</scope>
    <scope>IDENTIFICATION IN THE UNIPLEX COMPLEX</scope>
</reference>
<reference evidence="28 29" key="20">
    <citation type="journal article" date="2020" name="EMBO J.">
        <title>The structure of the MICU1-MICU2 complex unveils the regulation of the mitochondrial calcium uniporter.</title>
        <authorList>
            <person name="Wu W."/>
            <person name="Shen Q."/>
            <person name="Zhang R."/>
            <person name="Qiu Z."/>
            <person name="Wang Y."/>
            <person name="Zheng J."/>
            <person name="Jia Z."/>
        </authorList>
    </citation>
    <scope>X-RAY CRYSTALLOGRAPHY (2.10 ANGSTROMS) OF 84-406 IN COMPLEX WITH MICU1 AND CALCIUM</scope>
    <scope>FUNCTION</scope>
    <scope>INTERACTION WITH MICU1</scope>
    <scope>MUTAGENESIS OF LYS-206 AND GLN-336</scope>
</reference>
<reference evidence="30" key="21">
    <citation type="journal article" date="2020" name="IUCrJ">
        <title>Structure of the MICU1-MICU2 heterodimer provides insights into the gatekeeping threshold shift.</title>
        <authorList>
            <person name="Park J."/>
            <person name="Lee Y."/>
            <person name="Park T."/>
            <person name="Kang J.Y."/>
            <person name="Mun S.A."/>
            <person name="Jin M."/>
            <person name="Yang J."/>
            <person name="Eom S.H."/>
        </authorList>
    </citation>
    <scope>X-RAY CRYSTALLOGRAPHY (3.10 ANGSTROMS) OF 84-401 IN COMPLEX WITH MICU1</scope>
    <scope>FUNCTION</scope>
    <scope>INTERACTION WITH MICU1</scope>
    <scope>MUTAGENESIS OF ASP-185 AND GLU-196</scope>
</reference>
<reference evidence="31 32" key="22">
    <citation type="journal article" date="2020" name="Nature">
        <title>Structure and mechanism of the mitochondrial Ca2+ uniporter holocomplex.</title>
        <authorList>
            <person name="Fan M."/>
            <person name="Zhang J."/>
            <person name="Tsai C.W."/>
            <person name="Orlando B.J."/>
            <person name="Rodriguez M."/>
            <person name="Xu Y."/>
            <person name="Liao M."/>
            <person name="Tsai M.F."/>
            <person name="Feng L."/>
        </authorList>
    </citation>
    <scope>STRUCTURE BY ELECTRON MICROSCOPY (3.20 ANGSTROMS) OF 84-418 OF THE UNIPLEX COMPLEX</scope>
    <scope>FUNCTION</scope>
    <scope>IDENTIFICATION IN THE UNIPLEX COMPLEX</scope>
    <scope>MUTAGENESIS OF ARG-107; 120-ARG-LYS-121; ASP-154 AND ARG-352</scope>
</reference>
<reference evidence="27" key="23">
    <citation type="journal article" date="2021" name="Protein Cell">
        <title>Structure of intact human MCU supercomplex with the auxiliary MICU subunits.</title>
        <authorList>
            <person name="Zhuo W."/>
            <person name="Zhou H."/>
            <person name="Guo R."/>
            <person name="Yi J."/>
            <person name="Zhang L."/>
            <person name="Yu L."/>
            <person name="Sui Y."/>
            <person name="Zeng W."/>
            <person name="Wang P."/>
            <person name="Yang M."/>
        </authorList>
    </citation>
    <scope>STRUCTURE BY ELECTRON MICROSCOPY (3.60 ANGSTROMS) OF 83-418 OF THE UNIPLEX COMPLEX</scope>
    <scope>IDENTIFICATION IN THE UNIPLEX COMPLEX</scope>
</reference>
<feature type="transit peptide" description="Mitochondrion" evidence="1">
    <location>
        <begin position="1"/>
        <end position="22"/>
    </location>
</feature>
<feature type="chain" id="PRO_0000251217" description="Calcium uptake protein 2, mitochondrial">
    <location>
        <begin position="23"/>
        <end position="434"/>
    </location>
</feature>
<feature type="domain" description="EF-hand 1" evidence="2">
    <location>
        <begin position="172"/>
        <end position="207"/>
    </location>
</feature>
<feature type="domain" description="EF-hand 2; degenerate" evidence="2">
    <location>
        <begin position="227"/>
        <end position="262"/>
    </location>
</feature>
<feature type="domain" description="EF-hand 3; degenerate" evidence="2">
    <location>
        <begin position="293"/>
        <end position="328"/>
    </location>
</feature>
<feature type="domain" description="EF-hand 4" evidence="2">
    <location>
        <begin position="362"/>
        <end position="397"/>
    </location>
</feature>
<feature type="binding site" evidence="14 19 26 28">
    <location>
        <position position="185"/>
    </location>
    <ligand>
        <name>Ca(2+)</name>
        <dbReference type="ChEBI" id="CHEBI:29108"/>
        <label>1</label>
    </ligand>
</feature>
<feature type="binding site" evidence="14 19 26 28">
    <location>
        <position position="187"/>
    </location>
    <ligand>
        <name>Ca(2+)</name>
        <dbReference type="ChEBI" id="CHEBI:29108"/>
        <label>1</label>
    </ligand>
</feature>
<feature type="binding site" evidence="14 19 26 28">
    <location>
        <position position="189"/>
    </location>
    <ligand>
        <name>Ca(2+)</name>
        <dbReference type="ChEBI" id="CHEBI:29108"/>
        <label>1</label>
    </ligand>
</feature>
<feature type="binding site" evidence="14 19 26 28">
    <location>
        <position position="191"/>
    </location>
    <ligand>
        <name>Ca(2+)</name>
        <dbReference type="ChEBI" id="CHEBI:29108"/>
        <label>1</label>
    </ligand>
</feature>
<feature type="binding site" evidence="14 26">
    <location>
        <position position="193"/>
    </location>
    <ligand>
        <name>Ca(2+)</name>
        <dbReference type="ChEBI" id="CHEBI:29108"/>
        <label>1</label>
    </ligand>
</feature>
<feature type="binding site" evidence="14 19 26 28">
    <location>
        <position position="196"/>
    </location>
    <ligand>
        <name>Ca(2+)</name>
        <dbReference type="ChEBI" id="CHEBI:29108"/>
        <label>1</label>
    </ligand>
</feature>
<feature type="binding site" evidence="14 26">
    <location>
        <position position="375"/>
    </location>
    <ligand>
        <name>Ca(2+)</name>
        <dbReference type="ChEBI" id="CHEBI:29108"/>
        <label>2</label>
    </ligand>
</feature>
<feature type="binding site" evidence="14 26">
    <location>
        <position position="377"/>
    </location>
    <ligand>
        <name>Ca(2+)</name>
        <dbReference type="ChEBI" id="CHEBI:29108"/>
        <label>2</label>
    </ligand>
</feature>
<feature type="binding site" evidence="14 26">
    <location>
        <position position="379"/>
    </location>
    <ligand>
        <name>Ca(2+)</name>
        <dbReference type="ChEBI" id="CHEBI:29108"/>
        <label>2</label>
    </ligand>
</feature>
<feature type="binding site" evidence="14 26">
    <location>
        <position position="381"/>
    </location>
    <ligand>
        <name>Ca(2+)</name>
        <dbReference type="ChEBI" id="CHEBI:29108"/>
        <label>2</label>
    </ligand>
</feature>
<feature type="binding site" evidence="14 26">
    <location>
        <position position="386"/>
    </location>
    <ligand>
        <name>Ca(2+)</name>
        <dbReference type="ChEBI" id="CHEBI:29108"/>
        <label>2</label>
    </ligand>
</feature>
<feature type="modified residue" description="Phosphoserine" evidence="36">
    <location>
        <position position="205"/>
    </location>
</feature>
<feature type="disulfide bond" description="Interchain (with C-463 in MICU1)" evidence="16 31">
    <location>
        <position position="413"/>
    </location>
</feature>
<feature type="sequence variant" id="VAR_027662" description="In dbSNP:rs17853349." evidence="3">
    <original>Q</original>
    <variation>L</variation>
    <location>
        <position position="260"/>
    </location>
</feature>
<feature type="mutagenesis site" description="Does not affect its ability to regulate the activity of MCU; when associated with 120-E-E-121 and R-154." evidence="16">
    <original>R</original>
    <variation>E</variation>
    <location>
        <position position="107"/>
    </location>
</feature>
<feature type="mutagenesis site" description="Does not affect its ability to regulate the activity of MCU; when associated with E-107 and R-154." evidence="16">
    <original>RK</original>
    <variation>EE</variation>
    <location>
        <begin position="120"/>
        <end position="121"/>
    </location>
</feature>
<feature type="mutagenesis site" description="Does not affect its ability to regulate the activity of MCU; when associated with E-107 and 120-E-E-121." evidence="16">
    <original>D</original>
    <variation>R</variation>
    <location>
        <position position="154"/>
    </location>
</feature>
<feature type="mutagenesis site" description="Does not affect interaction with MICU1." evidence="14">
    <original>K</original>
    <variation>A</variation>
    <location>
        <position position="172"/>
    </location>
</feature>
<feature type="mutagenesis site" description="Abolishes mitochondrial Ca(2+) uptake; when associated with A-375 and A-386. In EF1(mut); decreased calcium-binding and abolished ability to interact with MICU1 when associated with K-196." evidence="5 14 15">
    <original>D</original>
    <variation>A</variation>
    <location>
        <position position="185"/>
    </location>
</feature>
<feature type="mutagenesis site" description="In EF1(mut); decreased calcium-binding and abolished ability to interact with MICU1 when associated with A-185." evidence="14 15">
    <original>E</original>
    <variation>K</variation>
    <location>
        <position position="196"/>
    </location>
</feature>
<feature type="mutagenesis site" description="Does not affect interaction with MICU2." evidence="19">
    <original>K</original>
    <variation>A</variation>
    <location>
        <position position="206"/>
    </location>
</feature>
<feature type="mutagenesis site" description="Does not affect interaction with MICU1." evidence="14">
    <original>E</original>
    <variation>A</variation>
    <location>
        <position position="329"/>
    </location>
</feature>
<feature type="mutagenesis site" description="Decreased interaction with MICU1." evidence="19">
    <original>Q</original>
    <variation>A</variation>
    <location>
        <position position="336"/>
    </location>
</feature>
<feature type="mutagenesis site" description="Abolished interaction with MICU1." evidence="14">
    <original>R</original>
    <variation>A</variation>
    <location>
        <position position="352"/>
    </location>
</feature>
<feature type="mutagenesis site" description="Abilished interaction with MICU1 and ability to regulate the activity of MCU." evidence="16">
    <original>R</original>
    <variation>E</variation>
    <location>
        <position position="352"/>
    </location>
</feature>
<feature type="mutagenesis site" description="Abolishes mitochondrial Ca(2+) uptake; when associated with A-185 and A-386." evidence="5">
    <original>D</original>
    <variation>A</variation>
    <location>
        <position position="375"/>
    </location>
</feature>
<feature type="mutagenesis site" description="Abolishes mitochondrial Ca(2+) uptake; when associated with A-185 and A-375." evidence="5">
    <original>E</original>
    <variation>A</variation>
    <location>
        <position position="386"/>
    </location>
</feature>
<feature type="sequence conflict" description="In Ref. 2; AAH34965." evidence="23" ref="2">
    <original>S</original>
    <variation>N</variation>
    <location>
        <position position="205"/>
    </location>
</feature>
<feature type="helix" evidence="37">
    <location>
        <begin position="87"/>
        <end position="93"/>
    </location>
</feature>
<feature type="strand" evidence="37">
    <location>
        <begin position="96"/>
        <end position="98"/>
    </location>
</feature>
<feature type="strand" evidence="37">
    <location>
        <begin position="101"/>
        <end position="104"/>
    </location>
</feature>
<feature type="helix" evidence="37">
    <location>
        <begin position="106"/>
        <end position="114"/>
    </location>
</feature>
<feature type="helix" evidence="37">
    <location>
        <begin position="129"/>
        <end position="135"/>
    </location>
</feature>
<feature type="turn" evidence="37">
    <location>
        <begin position="136"/>
        <end position="138"/>
    </location>
</feature>
<feature type="helix" evidence="37">
    <location>
        <begin position="139"/>
        <end position="141"/>
    </location>
</feature>
<feature type="helix" evidence="37">
    <location>
        <begin position="148"/>
        <end position="152"/>
    </location>
</feature>
<feature type="helix" evidence="37">
    <location>
        <begin position="160"/>
        <end position="170"/>
    </location>
</feature>
<feature type="helix" evidence="37">
    <location>
        <begin position="174"/>
        <end position="176"/>
    </location>
</feature>
<feature type="helix" evidence="37">
    <location>
        <begin position="177"/>
        <end position="184"/>
    </location>
</feature>
<feature type="strand" evidence="42">
    <location>
        <begin position="186"/>
        <end position="188"/>
    </location>
</feature>
<feature type="strand" evidence="37">
    <location>
        <begin position="189"/>
        <end position="192"/>
    </location>
</feature>
<feature type="helix" evidence="37">
    <location>
        <begin position="194"/>
        <end position="198"/>
    </location>
</feature>
<feature type="turn" evidence="38">
    <location>
        <begin position="218"/>
        <end position="222"/>
    </location>
</feature>
<feature type="helix" evidence="37">
    <location>
        <begin position="233"/>
        <end position="239"/>
    </location>
</feature>
<feature type="turn" evidence="40">
    <location>
        <begin position="240"/>
        <end position="242"/>
    </location>
</feature>
<feature type="strand" evidence="39">
    <location>
        <begin position="246"/>
        <end position="248"/>
    </location>
</feature>
<feature type="helix" evidence="37">
    <location>
        <begin position="249"/>
        <end position="272"/>
    </location>
</feature>
<feature type="strand" evidence="37">
    <location>
        <begin position="276"/>
        <end position="278"/>
    </location>
</feature>
<feature type="helix" evidence="37">
    <location>
        <begin position="280"/>
        <end position="288"/>
    </location>
</feature>
<feature type="helix" evidence="37">
    <location>
        <begin position="293"/>
        <end position="306"/>
    </location>
</feature>
<feature type="helix" evidence="37">
    <location>
        <begin position="315"/>
        <end position="324"/>
    </location>
</feature>
<feature type="helix" evidence="37">
    <location>
        <begin position="328"/>
        <end position="340"/>
    </location>
</feature>
<feature type="helix" evidence="37">
    <location>
        <begin position="347"/>
        <end position="358"/>
    </location>
</feature>
<feature type="helix" evidence="37">
    <location>
        <begin position="364"/>
        <end position="374"/>
    </location>
</feature>
<feature type="strand" evidence="37">
    <location>
        <begin position="378"/>
        <end position="380"/>
    </location>
</feature>
<feature type="helix" evidence="37">
    <location>
        <begin position="384"/>
        <end position="395"/>
    </location>
</feature>
<feature type="turn" evidence="39">
    <location>
        <begin position="397"/>
        <end position="400"/>
    </location>
</feature>
<feature type="helix" evidence="41">
    <location>
        <begin position="403"/>
        <end position="417"/>
    </location>
</feature>
<proteinExistence type="evidence at protein level"/>
<evidence type="ECO:0000255" key="1"/>
<evidence type="ECO:0000255" key="2">
    <source>
        <dbReference type="PROSITE-ProRule" id="PRU00448"/>
    </source>
</evidence>
<evidence type="ECO:0000269" key="3">
    <source>
    </source>
</evidence>
<evidence type="ECO:0000269" key="4">
    <source>
    </source>
</evidence>
<evidence type="ECO:0000269" key="5">
    <source>
    </source>
</evidence>
<evidence type="ECO:0000269" key="6">
    <source>
    </source>
</evidence>
<evidence type="ECO:0000269" key="7">
    <source>
    </source>
</evidence>
<evidence type="ECO:0000269" key="8">
    <source>
    </source>
</evidence>
<evidence type="ECO:0000269" key="9">
    <source>
    </source>
</evidence>
<evidence type="ECO:0000269" key="10">
    <source>
    </source>
</evidence>
<evidence type="ECO:0000269" key="11">
    <source>
    </source>
</evidence>
<evidence type="ECO:0000269" key="12">
    <source>
    </source>
</evidence>
<evidence type="ECO:0000269" key="13">
    <source>
    </source>
</evidence>
<evidence type="ECO:0000269" key="14">
    <source>
    </source>
</evidence>
<evidence type="ECO:0000269" key="15">
    <source>
    </source>
</evidence>
<evidence type="ECO:0000269" key="16">
    <source>
    </source>
</evidence>
<evidence type="ECO:0000269" key="17">
    <source>
    </source>
</evidence>
<evidence type="ECO:0000269" key="18">
    <source>
    </source>
</evidence>
<evidence type="ECO:0000269" key="19">
    <source>
    </source>
</evidence>
<evidence type="ECO:0000269" key="20">
    <source>
    </source>
</evidence>
<evidence type="ECO:0000303" key="21">
    <source>
    </source>
</evidence>
<evidence type="ECO:0000303" key="22">
    <source>
    </source>
</evidence>
<evidence type="ECO:0000305" key="23"/>
<evidence type="ECO:0000312" key="24">
    <source>
        <dbReference type="HGNC" id="HGNC:31830"/>
    </source>
</evidence>
<evidence type="ECO:0007744" key="25">
    <source>
        <dbReference type="PDB" id="6AGH"/>
    </source>
</evidence>
<evidence type="ECO:0007744" key="26">
    <source>
        <dbReference type="PDB" id="6IIH"/>
    </source>
</evidence>
<evidence type="ECO:0007744" key="27">
    <source>
        <dbReference type="PDB" id="6K7Y"/>
    </source>
</evidence>
<evidence type="ECO:0007744" key="28">
    <source>
        <dbReference type="PDB" id="6LB7"/>
    </source>
</evidence>
<evidence type="ECO:0007744" key="29">
    <source>
        <dbReference type="PDB" id="6LB8"/>
    </source>
</evidence>
<evidence type="ECO:0007744" key="30">
    <source>
        <dbReference type="PDB" id="6LE5"/>
    </source>
</evidence>
<evidence type="ECO:0007744" key="31">
    <source>
        <dbReference type="PDB" id="6WDN"/>
    </source>
</evidence>
<evidence type="ECO:0007744" key="32">
    <source>
        <dbReference type="PDB" id="6WDO"/>
    </source>
</evidence>
<evidence type="ECO:0007744" key="33">
    <source>
        <dbReference type="PDB" id="6XJV"/>
    </source>
</evidence>
<evidence type="ECO:0007744" key="34">
    <source>
        <dbReference type="PDB" id="6XJX"/>
    </source>
</evidence>
<evidence type="ECO:0007744" key="35">
    <source>
        <dbReference type="PDB" id="6XQN"/>
    </source>
</evidence>
<evidence type="ECO:0007744" key="36">
    <source>
    </source>
</evidence>
<evidence type="ECO:0007829" key="37">
    <source>
        <dbReference type="PDB" id="6IIH"/>
    </source>
</evidence>
<evidence type="ECO:0007829" key="38">
    <source>
        <dbReference type="PDB" id="6LB7"/>
    </source>
</evidence>
<evidence type="ECO:0007829" key="39">
    <source>
        <dbReference type="PDB" id="6LB8"/>
    </source>
</evidence>
<evidence type="ECO:0007829" key="40">
    <source>
        <dbReference type="PDB" id="6LE5"/>
    </source>
</evidence>
<evidence type="ECO:0007829" key="41">
    <source>
        <dbReference type="PDB" id="6WDN"/>
    </source>
</evidence>
<evidence type="ECO:0007829" key="42">
    <source>
        <dbReference type="PDB" id="6XQN"/>
    </source>
</evidence>
<dbReference type="EMBL" id="AL138680">
    <property type="status" value="NOT_ANNOTATED_CDS"/>
    <property type="molecule type" value="Genomic_DNA"/>
</dbReference>
<dbReference type="EMBL" id="AL136219">
    <property type="status" value="NOT_ANNOTATED_CDS"/>
    <property type="molecule type" value="Genomic_DNA"/>
</dbReference>
<dbReference type="EMBL" id="BC031089">
    <property type="protein sequence ID" value="AAH31089.1"/>
    <property type="molecule type" value="mRNA"/>
</dbReference>
<dbReference type="EMBL" id="BC034965">
    <property type="protein sequence ID" value="AAH34965.1"/>
    <property type="molecule type" value="mRNA"/>
</dbReference>
<dbReference type="EMBL" id="AK091907">
    <property type="protein sequence ID" value="BAC03769.1"/>
    <property type="status" value="ALT_INIT"/>
    <property type="molecule type" value="mRNA"/>
</dbReference>
<dbReference type="CCDS" id="CCDS9297.1"/>
<dbReference type="RefSeq" id="NP_689939.1">
    <property type="nucleotide sequence ID" value="NM_152726.3"/>
</dbReference>
<dbReference type="PDB" id="6AGH">
    <property type="method" value="X-ray"/>
    <property type="resolution" value="2.74 A"/>
    <property type="chains" value="A/B=62-398"/>
</dbReference>
<dbReference type="PDB" id="6IIH">
    <property type="method" value="X-ray"/>
    <property type="resolution" value="1.96 A"/>
    <property type="chains" value="A/B=85-406"/>
</dbReference>
<dbReference type="PDB" id="6K7Y">
    <property type="method" value="EM"/>
    <property type="resolution" value="3.60 A"/>
    <property type="chains" value="J/W=83-418"/>
</dbReference>
<dbReference type="PDB" id="6LB7">
    <property type="method" value="X-ray"/>
    <property type="resolution" value="2.10 A"/>
    <property type="chains" value="B/D=84-406"/>
</dbReference>
<dbReference type="PDB" id="6LB8">
    <property type="method" value="X-ray"/>
    <property type="resolution" value="3.28 A"/>
    <property type="chains" value="B/D=84-406"/>
</dbReference>
<dbReference type="PDB" id="6LE5">
    <property type="method" value="X-ray"/>
    <property type="resolution" value="3.10 A"/>
    <property type="chains" value="B/C/F/H=84-401"/>
</dbReference>
<dbReference type="PDB" id="6WDN">
    <property type="method" value="EM"/>
    <property type="resolution" value="3.20 A"/>
    <property type="chains" value="A=84-418"/>
</dbReference>
<dbReference type="PDB" id="6WDO">
    <property type="method" value="EM"/>
    <property type="resolution" value="3.60 A"/>
    <property type="chains" value="R/T=85-394"/>
</dbReference>
<dbReference type="PDB" id="6XJV">
    <property type="method" value="EM"/>
    <property type="resolution" value="4.17 A"/>
    <property type="chains" value="R/T=1-434"/>
</dbReference>
<dbReference type="PDB" id="6XJX">
    <property type="method" value="EM"/>
    <property type="resolution" value="4.60 A"/>
    <property type="chains" value="R=1-434"/>
</dbReference>
<dbReference type="PDB" id="6XQN">
    <property type="method" value="EM"/>
    <property type="resolution" value="3.30 A"/>
    <property type="chains" value="J=52-434"/>
</dbReference>
<dbReference type="PDB" id="6XQO">
    <property type="method" value="EM"/>
    <property type="resolution" value="3.10 A"/>
    <property type="chains" value="J=52-434"/>
</dbReference>
<dbReference type="PDBsum" id="6AGH"/>
<dbReference type="PDBsum" id="6IIH"/>
<dbReference type="PDBsum" id="6K7Y"/>
<dbReference type="PDBsum" id="6LB7"/>
<dbReference type="PDBsum" id="6LB8"/>
<dbReference type="PDBsum" id="6LE5"/>
<dbReference type="PDBsum" id="6WDN"/>
<dbReference type="PDBsum" id="6WDO"/>
<dbReference type="PDBsum" id="6XJV"/>
<dbReference type="PDBsum" id="6XJX"/>
<dbReference type="PDBsum" id="6XQN"/>
<dbReference type="PDBsum" id="6XQO"/>
<dbReference type="EMDB" id="EMD-21642"/>
<dbReference type="EMDB" id="EMD-21643"/>
<dbReference type="EMDB" id="EMD-22215"/>
<dbReference type="EMDB" id="EMD-22216"/>
<dbReference type="EMDB" id="EMD-22290"/>
<dbReference type="EMDB" id="EMD-22291"/>
<dbReference type="EMDB" id="EMD-9945"/>
<dbReference type="SMR" id="Q8IYU8"/>
<dbReference type="BioGRID" id="128692">
    <property type="interactions" value="99"/>
</dbReference>
<dbReference type="ComplexPortal" id="CPX-5961">
    <property type="entry name" value="Mitochondrial calcium uniporter complex, MICU1-MICU2 variant"/>
</dbReference>
<dbReference type="ComplexPortal" id="CPX-5966">
    <property type="entry name" value="Mitochondrial calcium uniporter complex, MICUB variant"/>
</dbReference>
<dbReference type="CORUM" id="Q8IYU8"/>
<dbReference type="FunCoup" id="Q8IYU8">
    <property type="interactions" value="441"/>
</dbReference>
<dbReference type="IntAct" id="Q8IYU8">
    <property type="interactions" value="68"/>
</dbReference>
<dbReference type="MINT" id="Q8IYU8"/>
<dbReference type="STRING" id="9606.ENSP00000371811"/>
<dbReference type="TCDB" id="8.A.44.1.2">
    <property type="family name" value="the mitochondrial ef hand ca(2+) uniporter regulator (micu) family"/>
</dbReference>
<dbReference type="GlyGen" id="Q8IYU8">
    <property type="glycosylation" value="2 sites, 1 O-linked glycan (1 site)"/>
</dbReference>
<dbReference type="iPTMnet" id="Q8IYU8"/>
<dbReference type="PhosphoSitePlus" id="Q8IYU8"/>
<dbReference type="SwissPalm" id="Q8IYU8"/>
<dbReference type="BioMuta" id="MICU2"/>
<dbReference type="DMDM" id="115502157"/>
<dbReference type="jPOST" id="Q8IYU8"/>
<dbReference type="MassIVE" id="Q8IYU8"/>
<dbReference type="PaxDb" id="9606-ENSP00000371811"/>
<dbReference type="PeptideAtlas" id="Q8IYU8"/>
<dbReference type="ProteomicsDB" id="71244"/>
<dbReference type="Pumba" id="Q8IYU8"/>
<dbReference type="Antibodypedia" id="22397">
    <property type="antibodies" value="117 antibodies from 19 providers"/>
</dbReference>
<dbReference type="DNASU" id="221154"/>
<dbReference type="Ensembl" id="ENST00000382374.9">
    <property type="protein sequence ID" value="ENSP00000371811.4"/>
    <property type="gene ID" value="ENSG00000165487.14"/>
</dbReference>
<dbReference type="GeneID" id="221154"/>
<dbReference type="KEGG" id="hsa:221154"/>
<dbReference type="MANE-Select" id="ENST00000382374.9">
    <property type="protein sequence ID" value="ENSP00000371811.4"/>
    <property type="RefSeq nucleotide sequence ID" value="NM_152726.3"/>
    <property type="RefSeq protein sequence ID" value="NP_689939.1"/>
</dbReference>
<dbReference type="UCSC" id="uc001uof.4">
    <property type="organism name" value="human"/>
</dbReference>
<dbReference type="AGR" id="HGNC:31830"/>
<dbReference type="CTD" id="221154"/>
<dbReference type="DisGeNET" id="221154"/>
<dbReference type="GeneCards" id="MICU2"/>
<dbReference type="HGNC" id="HGNC:31830">
    <property type="gene designation" value="MICU2"/>
</dbReference>
<dbReference type="HPA" id="ENSG00000165487">
    <property type="expression patterns" value="Low tissue specificity"/>
</dbReference>
<dbReference type="MalaCards" id="MICU2"/>
<dbReference type="MIM" id="610632">
    <property type="type" value="gene"/>
</dbReference>
<dbReference type="neXtProt" id="NX_Q8IYU8"/>
<dbReference type="OpenTargets" id="ENSG00000165487"/>
<dbReference type="PharmGKB" id="PA134891566"/>
<dbReference type="VEuPathDB" id="HostDB:ENSG00000165487"/>
<dbReference type="eggNOG" id="KOG2643">
    <property type="taxonomic scope" value="Eukaryota"/>
</dbReference>
<dbReference type="GeneTree" id="ENSGT00950000183079"/>
<dbReference type="HOGENOM" id="CLU_027103_0_1_1"/>
<dbReference type="InParanoid" id="Q8IYU8"/>
<dbReference type="OMA" id="LKYQEFH"/>
<dbReference type="OrthoDB" id="5859791at2759"/>
<dbReference type="PAN-GO" id="Q8IYU8">
    <property type="GO annotations" value="4 GO annotations based on evolutionary models"/>
</dbReference>
<dbReference type="PhylomeDB" id="Q8IYU8"/>
<dbReference type="TreeFam" id="TF320374"/>
<dbReference type="PathwayCommons" id="Q8IYU8"/>
<dbReference type="Reactome" id="R-HSA-8949215">
    <property type="pathway name" value="Mitochondrial calcium ion transport"/>
</dbReference>
<dbReference type="Reactome" id="R-HSA-8949664">
    <property type="pathway name" value="Processing of SMDT1"/>
</dbReference>
<dbReference type="Reactome" id="R-HSA-9837999">
    <property type="pathway name" value="Mitochondrial protein degradation"/>
</dbReference>
<dbReference type="SignaLink" id="Q8IYU8"/>
<dbReference type="SIGNOR" id="Q8IYU8"/>
<dbReference type="BioGRID-ORCS" id="221154">
    <property type="hits" value="15 hits in 1160 CRISPR screens"/>
</dbReference>
<dbReference type="ChiTaRS" id="MICU2">
    <property type="organism name" value="human"/>
</dbReference>
<dbReference type="GenomeRNAi" id="221154"/>
<dbReference type="Pharos" id="Q8IYU8">
    <property type="development level" value="Tbio"/>
</dbReference>
<dbReference type="PRO" id="PR:Q8IYU8"/>
<dbReference type="Proteomes" id="UP000005640">
    <property type="component" value="Chromosome 13"/>
</dbReference>
<dbReference type="RNAct" id="Q8IYU8">
    <property type="molecule type" value="protein"/>
</dbReference>
<dbReference type="Bgee" id="ENSG00000165487">
    <property type="expression patterns" value="Expressed in choroid plexus epithelium and 208 other cell types or tissues"/>
</dbReference>
<dbReference type="ExpressionAtlas" id="Q8IYU8">
    <property type="expression patterns" value="baseline and differential"/>
</dbReference>
<dbReference type="GO" id="GO:0034704">
    <property type="term" value="C:calcium channel complex"/>
    <property type="evidence" value="ECO:0000250"/>
    <property type="project" value="UniProtKB"/>
</dbReference>
<dbReference type="GO" id="GO:0005743">
    <property type="term" value="C:mitochondrial inner membrane"/>
    <property type="evidence" value="ECO:0000314"/>
    <property type="project" value="UniProtKB"/>
</dbReference>
<dbReference type="GO" id="GO:0005758">
    <property type="term" value="C:mitochondrial intermembrane space"/>
    <property type="evidence" value="ECO:0000314"/>
    <property type="project" value="UniProtKB"/>
</dbReference>
<dbReference type="GO" id="GO:0005739">
    <property type="term" value="C:mitochondrion"/>
    <property type="evidence" value="ECO:0006056"/>
    <property type="project" value="FlyBase"/>
</dbReference>
<dbReference type="GO" id="GO:1990246">
    <property type="term" value="C:uniplex complex"/>
    <property type="evidence" value="ECO:0000314"/>
    <property type="project" value="UniProtKB"/>
</dbReference>
<dbReference type="GO" id="GO:0005246">
    <property type="term" value="F:calcium channel regulator activity"/>
    <property type="evidence" value="ECO:0000314"/>
    <property type="project" value="UniProt"/>
</dbReference>
<dbReference type="GO" id="GO:0005509">
    <property type="term" value="F:calcium ion binding"/>
    <property type="evidence" value="ECO:0000314"/>
    <property type="project" value="UniProtKB"/>
</dbReference>
<dbReference type="GO" id="GO:0061891">
    <property type="term" value="F:calcium ion sensor activity"/>
    <property type="evidence" value="ECO:0000314"/>
    <property type="project" value="UniProtKB"/>
</dbReference>
<dbReference type="GO" id="GO:0046982">
    <property type="term" value="F:protein heterodimerization activity"/>
    <property type="evidence" value="ECO:0000353"/>
    <property type="project" value="UniProtKB"/>
</dbReference>
<dbReference type="GO" id="GO:0036444">
    <property type="term" value="P:calcium import into the mitochondrion"/>
    <property type="evidence" value="ECO:0000314"/>
    <property type="project" value="UniProtKB"/>
</dbReference>
<dbReference type="GO" id="GO:0071277">
    <property type="term" value="P:cellular response to calcium ion"/>
    <property type="evidence" value="ECO:0000314"/>
    <property type="project" value="UniProt"/>
</dbReference>
<dbReference type="GO" id="GO:0051560">
    <property type="term" value="P:mitochondrial calcium ion homeostasis"/>
    <property type="evidence" value="ECO:0000314"/>
    <property type="project" value="ComplexPortal"/>
</dbReference>
<dbReference type="GO" id="GO:0006851">
    <property type="term" value="P:mitochondrial calcium ion transmembrane transport"/>
    <property type="evidence" value="ECO:0000314"/>
    <property type="project" value="UniProtKB"/>
</dbReference>
<dbReference type="GO" id="GO:0051562">
    <property type="term" value="P:negative regulation of mitochondrial calcium ion concentration"/>
    <property type="evidence" value="ECO:0000314"/>
    <property type="project" value="UniProtKB"/>
</dbReference>
<dbReference type="GO" id="GO:0051561">
    <property type="term" value="P:positive regulation of mitochondrial calcium ion concentration"/>
    <property type="evidence" value="ECO:0007669"/>
    <property type="project" value="Ensembl"/>
</dbReference>
<dbReference type="CDD" id="cd16174">
    <property type="entry name" value="EFh_MICU2"/>
    <property type="match status" value="1"/>
</dbReference>
<dbReference type="FunFam" id="1.10.238.10:FF:000149">
    <property type="entry name" value="Mitochondrial calcium uptake family member 3"/>
    <property type="match status" value="1"/>
</dbReference>
<dbReference type="FunFam" id="1.10.238.10:FF:000211">
    <property type="entry name" value="Mitochondrial calcium uptake family member 3"/>
    <property type="match status" value="1"/>
</dbReference>
<dbReference type="Gene3D" id="1.10.238.10">
    <property type="entry name" value="EF-hand"/>
    <property type="match status" value="2"/>
</dbReference>
<dbReference type="InterPro" id="IPR011992">
    <property type="entry name" value="EF-hand-dom_pair"/>
</dbReference>
<dbReference type="InterPro" id="IPR002048">
    <property type="entry name" value="EF_hand_dom"/>
</dbReference>
<dbReference type="InterPro" id="IPR039800">
    <property type="entry name" value="MICU1/2/3"/>
</dbReference>
<dbReference type="PANTHER" id="PTHR12294:SF3">
    <property type="entry name" value="CALCIUM UPTAKE PROTEIN 2, MITOCHONDRIAL"/>
    <property type="match status" value="1"/>
</dbReference>
<dbReference type="PANTHER" id="PTHR12294">
    <property type="entry name" value="EF HAND DOMAIN FAMILY A1,A2-RELATED"/>
    <property type="match status" value="1"/>
</dbReference>
<dbReference type="SMART" id="SM00054">
    <property type="entry name" value="EFh"/>
    <property type="match status" value="2"/>
</dbReference>
<dbReference type="SUPFAM" id="SSF47473">
    <property type="entry name" value="EF-hand"/>
    <property type="match status" value="2"/>
</dbReference>
<dbReference type="PROSITE" id="PS50222">
    <property type="entry name" value="EF_HAND_2"/>
    <property type="match status" value="4"/>
</dbReference>
<sequence length="434" mass="49666">MAAAAGSCARVAAWGGKLRRGLAVSRQAVRSPGPLAAAVAGAALAGAGAAWHHSRVSVAARDGSFTVSAQKNVEHGIIYIGKPSLRKQRFMQFSSLEHEGEYYMTPRDFLFSVMFEQMERKTSVKKLTKKDIEDTLSGIQTAGCGSTFFRDLGDKGLISYTEYLFLLTILTKPHSGFHVAFKMLDTDGNEMIEKREFFKLQKIISKQDDLMTVKTNETGYQEAIVKEPEINTTLQMRFFGKRGQRKLHYKEFRRFMENLQTEIQEMEFLQFSKGLSFMRKEDFAEWLLFFTNTENKDIYWKNVREKLSAGESISLDEFKSFCHFTTHLEDFAIAMQMFSLAHRPVRLAEFKRAVKVATGQELSNNILDTVFKIFDLDGDECLSHEEFLGVLKNRMHRGLWVPQHQSIQEYWKCVKKESIKGVKEVWKQAGKGLF</sequence>
<keyword id="KW-0002">3D-structure</keyword>
<keyword id="KW-1015">Disulfide bond</keyword>
<keyword id="KW-0472">Membrane</keyword>
<keyword id="KW-0496">Mitochondrion</keyword>
<keyword id="KW-0999">Mitochondrion inner membrane</keyword>
<keyword id="KW-0597">Phosphoprotein</keyword>
<keyword id="KW-1267">Proteomics identification</keyword>
<keyword id="KW-1185">Reference proteome</keyword>
<keyword id="KW-0677">Repeat</keyword>
<keyword id="KW-0809">Transit peptide</keyword>
<gene>
    <name evidence="21 24" type="primary">MICU2</name>
    <name evidence="24" type="synonym">EFHA1</name>
</gene>
<protein>
    <recommendedName>
        <fullName evidence="23">Calcium uptake protein 2, mitochondrial</fullName>
        <shortName evidence="22">hMICU3</shortName>
    </recommendedName>
    <alternativeName>
        <fullName evidence="24">EF-hand domain-containing family member A1</fullName>
    </alternativeName>
</protein>
<accession>Q8IYU8</accession>
<accession>Q8N0T6</accession>
<accession>Q8NAX8</accession>
<comment type="function">
    <text evidence="5 6 10 12 13 14 15 16 17 18 19">Calcium sensor of the mitochondrial calcium uniporter (MCU) channel, which senses calcium level via its EF-hand domains (PubMed:24503055, PubMed:24560927, PubMed:26903221, PubMed:28615291, PubMed:30699349, PubMed:31397067, PubMed:32494073, PubMed:32667285, PubMed:32762847, PubMed:32790952). MICU1 and MICU2 form a disulfide-linked heterodimer that stimulates and inhibits MCU activity, depending on the concentration of calcium (PubMed:24560927, PubMed:26903221, PubMed:28615291, PubMed:30699349, PubMed:31397067, PubMed:32148862, PubMed:32494073, PubMed:32667285, PubMed:32762847, PubMed:32790952). At low calcium levels, MICU1 occludes the pore of the MCU channel, preventing mitochondrial calcium uptake (PubMed:32494073, PubMed:32667285, PubMed:32762847). At higher calcium levels, calcium-binding to MICU1 and MICU2 induces a conformational change that weakens MCU-MICU1 interactions and moves the MICU1-MICU2 heterodimer away from the pore, allowing calcium permeation through the MCU channel (PubMed:32494073, PubMed:32667285, PubMed:32762847).</text>
</comment>
<comment type="subunit">
    <text evidence="4 6 7 8 12 13 14 15 16 17 18 19 20">Heterodimer; disulfide-linked; heterodimerizes with MICU1 (PubMed:24560927, PubMed:28615291, PubMed:30699349, PubMed:31397067, PubMed:32148862, PubMed:32494073, PubMed:32790952). Component of the uniplex complex, composed of MCU, EMRE/SMDT1, MICU1 and MICU2 in a 4:4:1:1 stoichiometry (PubMed:24231807, PubMed:24560927, PubMed:26341627, PubMed:26387864, PubMed:32494073, PubMed:32667285, PubMed:32762847, PubMed:32862359).</text>
</comment>
<comment type="interaction">
    <interactant intactId="EBI-3197790">
        <id>Q8IYU8</id>
    </interactant>
    <interactant intactId="EBI-2371996">
        <id>Q9BPX6</id>
        <label>MICU1</label>
    </interactant>
    <organismsDiffer>false</organismsDiffer>
    <experiments>8</experiments>
</comment>
<comment type="subcellular location">
    <subcellularLocation>
        <location evidence="4 6 9 11">Mitochondrion intermembrane space</location>
    </subcellularLocation>
    <subcellularLocation>
        <location evidence="4 11 12">Mitochondrion inner membrane</location>
    </subcellularLocation>
    <text evidence="4">Recruited to the mitochondrial inner membrane via its association with the uniplex complex.</text>
</comment>
<comment type="domain">
    <text evidence="5 14">EF-hand domains 1 and 4 have high affinity for calcium and act as sensors of mitochondrial matrix calcium levels (PubMed:24503055, PubMed:31397067). EF-hand domains 2 and 3 are degenerate (PubMed:31397067).</text>
</comment>
<comment type="similarity">
    <text evidence="23">Belongs to the MICU1 family. MICU2 subfamily.</text>
</comment>
<comment type="sequence caution" evidence="23">
    <conflict type="erroneous initiation">
        <sequence resource="EMBL-CDS" id="BAC03769"/>
    </conflict>
    <text>Truncated N-terminus.</text>
</comment>
<organism>
    <name type="scientific">Homo sapiens</name>
    <name type="common">Human</name>
    <dbReference type="NCBI Taxonomy" id="9606"/>
    <lineage>
        <taxon>Eukaryota</taxon>
        <taxon>Metazoa</taxon>
        <taxon>Chordata</taxon>
        <taxon>Craniata</taxon>
        <taxon>Vertebrata</taxon>
        <taxon>Euteleostomi</taxon>
        <taxon>Mammalia</taxon>
        <taxon>Eutheria</taxon>
        <taxon>Euarchontoglires</taxon>
        <taxon>Primates</taxon>
        <taxon>Haplorrhini</taxon>
        <taxon>Catarrhini</taxon>
        <taxon>Hominidae</taxon>
        <taxon>Homo</taxon>
    </lineage>
</organism>
<name>MICU2_HUMAN</name>